<evidence type="ECO:0000255" key="1"/>
<evidence type="ECO:0000255" key="2">
    <source>
        <dbReference type="PROSITE-ProRule" id="PRU00338"/>
    </source>
</evidence>
<evidence type="ECO:0000255" key="3">
    <source>
        <dbReference type="PROSITE-ProRule" id="PRU00509"/>
    </source>
</evidence>
<evidence type="ECO:0000256" key="4">
    <source>
        <dbReference type="SAM" id="MobiDB-lite"/>
    </source>
</evidence>
<evidence type="ECO:0000269" key="5">
    <source>
    </source>
</evidence>
<evidence type="ECO:0000269" key="6">
    <source>
    </source>
</evidence>
<evidence type="ECO:0000269" key="7">
    <source>
    </source>
</evidence>
<evidence type="ECO:0000269" key="8">
    <source>
    </source>
</evidence>
<evidence type="ECO:0000269" key="9">
    <source>
    </source>
</evidence>
<evidence type="ECO:0000269" key="10">
    <source>
    </source>
</evidence>
<evidence type="ECO:0000269" key="11">
    <source>
    </source>
</evidence>
<evidence type="ECO:0000269" key="12">
    <source>
    </source>
</evidence>
<evidence type="ECO:0000269" key="13">
    <source>
    </source>
</evidence>
<evidence type="ECO:0000269" key="14">
    <source>
    </source>
</evidence>
<evidence type="ECO:0000269" key="15">
    <source>
    </source>
</evidence>
<evidence type="ECO:0000269" key="16">
    <source>
    </source>
</evidence>
<evidence type="ECO:0000269" key="17">
    <source>
    </source>
</evidence>
<evidence type="ECO:0000269" key="18">
    <source>
    </source>
</evidence>
<evidence type="ECO:0000269" key="19">
    <source>
    </source>
</evidence>
<evidence type="ECO:0000269" key="20">
    <source>
    </source>
</evidence>
<evidence type="ECO:0000269" key="21">
    <source>
    </source>
</evidence>
<evidence type="ECO:0000269" key="22">
    <source>
    </source>
</evidence>
<evidence type="ECO:0000269" key="23">
    <source>
    </source>
</evidence>
<evidence type="ECO:0000269" key="24">
    <source>
    </source>
</evidence>
<evidence type="ECO:0000269" key="25">
    <source>
    </source>
</evidence>
<evidence type="ECO:0000269" key="26">
    <source>
    </source>
</evidence>
<evidence type="ECO:0000269" key="27">
    <source ref="36"/>
</evidence>
<evidence type="ECO:0000303" key="28">
    <source>
    </source>
</evidence>
<evidence type="ECO:0000303" key="29">
    <source>
    </source>
</evidence>
<evidence type="ECO:0000303" key="30">
    <source>
    </source>
</evidence>
<evidence type="ECO:0000303" key="31">
    <source>
    </source>
</evidence>
<evidence type="ECO:0000303" key="32">
    <source ref="5"/>
</evidence>
<evidence type="ECO:0000305" key="33"/>
<evidence type="ECO:0000312" key="34">
    <source>
        <dbReference type="HGNC" id="HGNC:6916"/>
    </source>
</evidence>
<evidence type="ECO:0007744" key="35">
    <source>
        <dbReference type="PDB" id="1IG4"/>
    </source>
</evidence>
<evidence type="ECO:0007744" key="36">
    <source>
        <dbReference type="PDB" id="4D4W"/>
    </source>
</evidence>
<evidence type="ECO:0007744" key="37">
    <source>
        <dbReference type="PDB" id="5W9Q"/>
    </source>
</evidence>
<evidence type="ECO:0007744" key="38">
    <source>
        <dbReference type="PDB" id="6D1T"/>
    </source>
</evidence>
<evidence type="ECO:0007744" key="39">
    <source>
    </source>
</evidence>
<evidence type="ECO:0007744" key="40">
    <source>
    </source>
</evidence>
<evidence type="ECO:0007744" key="41">
    <source>
    </source>
</evidence>
<evidence type="ECO:0007744" key="42">
    <source>
    </source>
</evidence>
<evidence type="ECO:0007744" key="43">
    <source>
    </source>
</evidence>
<evidence type="ECO:0007744" key="44">
    <source>
    </source>
</evidence>
<evidence type="ECO:0007744" key="45">
    <source>
    </source>
</evidence>
<evidence type="ECO:0007744" key="46">
    <source>
    </source>
</evidence>
<evidence type="ECO:0007829" key="47">
    <source>
        <dbReference type="PDB" id="1D9N"/>
    </source>
</evidence>
<evidence type="ECO:0007829" key="48">
    <source>
        <dbReference type="PDB" id="1IG4"/>
    </source>
</evidence>
<evidence type="ECO:0007829" key="49">
    <source>
        <dbReference type="PDB" id="4D4W"/>
    </source>
</evidence>
<evidence type="ECO:0007829" key="50">
    <source>
        <dbReference type="PDB" id="5W9Q"/>
    </source>
</evidence>
<evidence type="ECO:0007829" key="51">
    <source>
        <dbReference type="PDB" id="6D1T"/>
    </source>
</evidence>
<keyword id="KW-0002">3D-structure</keyword>
<keyword id="KW-0025">Alternative splicing</keyword>
<keyword id="KW-0158">Chromosome</keyword>
<keyword id="KW-0238">DNA-binding</keyword>
<keyword id="KW-1017">Isopeptide bond</keyword>
<keyword id="KW-0479">Metal-binding</keyword>
<keyword id="KW-0539">Nucleus</keyword>
<keyword id="KW-0597">Phosphoprotein</keyword>
<keyword id="KW-1267">Proteomics identification</keyword>
<keyword id="KW-1185">Reference proteome</keyword>
<keyword id="KW-0677">Repeat</keyword>
<keyword id="KW-0804">Transcription</keyword>
<keyword id="KW-0805">Transcription regulation</keyword>
<keyword id="KW-0832">Ubl conjugation</keyword>
<keyword id="KW-0862">Zinc</keyword>
<keyword id="KW-0863">Zinc-finger</keyword>
<protein>
    <recommendedName>
        <fullName evidence="33">Methyl-CpG-binding domain protein 1</fullName>
    </recommendedName>
    <alternativeName>
        <fullName>CXXC-type zinc finger protein 3</fullName>
    </alternativeName>
    <alternativeName>
        <fullName>Methyl-CpG-binding protein MBD1</fullName>
    </alternativeName>
    <alternativeName>
        <fullName>Protein containing methyl-CpG-binding domain 1</fullName>
    </alternativeName>
</protein>
<accession>Q9UIS9</accession>
<accession>A4UTZ0</accession>
<accession>B4DXJ5</accession>
<accession>E9PEC5</accession>
<accession>K7ELI2</accession>
<accession>K7EQZ4</accession>
<accession>K7ESN0</accession>
<accession>O15248</accession>
<accession>O95241</accession>
<accession>Q7Z7B5</accession>
<accession>Q8N4W4</accession>
<accession>Q9UNZ6</accession>
<accession>Q9UNZ7</accession>
<accession>Q9UNZ8</accession>
<accession>Q9UNZ9</accession>
<comment type="function">
    <text evidence="6 8 10 11 12 13 14 25 26">Transcriptional repressor that binds CpG islands in promoters where the DNA is methylated at position 5 of cytosine within CpG dinucleotides. Binding is abolished by the presence of 7-mG that is produced by DNA damage by methylmethanesulfonate (MMS). Acts as transcriptional repressor and plays a role in gene silencing by recruiting ATF7IP, which in turn recruits factors such as the histone methyltransferase SETDB1. Probably forms a complex with SETDB1 and ATF7IP that represses transcription and couples DNA methylation and histone 'Lys-9' trimethylation. Isoform 1 and isoform 2 can also repress transcription from unmethylated promoters.</text>
</comment>
<comment type="subunit">
    <text evidence="10 11 12 13 15 17 18 20 25">Interacts with OASL, ATF7IP, ATF7IP2 and BAHD1 (PubMed:12665582, PubMed:14728690, PubMed:15691849, PubMed:16757475, PubMed:19666599). Binds CHAF1A and the SUV39H1-CBX5 complex via the MBD domain (PubMed:12697822, PubMed:12711603). Binds MGP via the TRD domain (PubMed:14555760). May be part of the MeCP1 complex (PubMed:9207790).</text>
</comment>
<comment type="interaction">
    <interactant intactId="EBI-867196">
        <id>Q9UIS9</id>
    </interactant>
    <interactant intactId="EBI-78219">
        <id>P45973</id>
        <label>CBX5</label>
    </interactant>
    <organismsDiffer>false</organismsDiffer>
    <experiments>6</experiments>
</comment>
<comment type="interaction">
    <interactant intactId="EBI-867196">
        <id>Q9UIS9</id>
    </interactant>
    <interactant intactId="EBI-1020839">
        <id>Q13111</id>
        <label>CHAF1A</label>
    </interactant>
    <organismsDiffer>false</organismsDiffer>
    <experiments>3</experiments>
</comment>
<comment type="interaction">
    <interactant intactId="EBI-867196">
        <id>Q9UIS9</id>
    </interactant>
    <interactant intactId="EBI-301834">
        <id>Q13547</id>
        <label>HDAC1</label>
    </interactant>
    <organismsDiffer>false</organismsDiffer>
    <experiments>2</experiments>
</comment>
<comment type="interaction">
    <interactant intactId="EBI-867196">
        <id>Q9UIS9</id>
    </interactant>
    <interactant intactId="EBI-301821">
        <id>Q92769</id>
        <label>HDAC2</label>
    </interactant>
    <organismsDiffer>false</organismsDiffer>
    <experiments>2</experiments>
</comment>
<comment type="interaction">
    <interactant intactId="EBI-867196">
        <id>Q9UIS9</id>
    </interactant>
    <interactant intactId="EBI-607682">
        <id>O15379</id>
        <label>HDAC3</label>
    </interactant>
    <organismsDiffer>false</organismsDiffer>
    <experiments>3</experiments>
</comment>
<comment type="interaction">
    <interactant intactId="EBI-867196">
        <id>Q9UIS9</id>
    </interactant>
    <interactant intactId="EBI-466029">
        <id>P42858</id>
        <label>HTT</label>
    </interactant>
    <organismsDiffer>false</organismsDiffer>
    <experiments>2</experiments>
</comment>
<comment type="interaction">
    <interactant intactId="EBI-867196">
        <id>Q9UIS9</id>
    </interactant>
    <interactant intactId="EBI-946274">
        <id>Q99435</id>
        <label>NELL2</label>
    </interactant>
    <organismsDiffer>false</organismsDiffer>
    <experiments>2</experiments>
</comment>
<comment type="interaction">
    <interactant intactId="EBI-867196">
        <id>Q9UIS9</id>
    </interactant>
    <interactant intactId="EBI-629434">
        <id>O75925</id>
        <label>PIAS1</label>
    </interactant>
    <organismsDiffer>false</organismsDiffer>
    <experiments>3</experiments>
</comment>
<comment type="interaction">
    <interactant intactId="EBI-867196">
        <id>Q9UIS9</id>
    </interactant>
    <interactant intactId="EBI-2803703">
        <id>Q9Y6X2</id>
        <label>PIAS3</label>
    </interactant>
    <organismsDiffer>false</organismsDiffer>
    <experiments>3</experiments>
</comment>
<comment type="interaction">
    <interactant intactId="EBI-867196">
        <id>Q9UIS9</id>
    </interactant>
    <interactant intactId="EBI-867256">
        <id>Q15156</id>
        <label>PML-RAR</label>
    </interactant>
    <organismsDiffer>false</organismsDiffer>
    <experiments>4</experiments>
</comment>
<comment type="interaction">
    <interactant intactId="EBI-867196">
        <id>Q9UIS9</id>
    </interactant>
    <interactant intactId="EBI-79691">
        <id>Q15047</id>
        <label>SETDB1</label>
    </interactant>
    <organismsDiffer>false</organismsDiffer>
    <experiments>3</experiments>
</comment>
<comment type="interaction">
    <interactant intactId="EBI-867196">
        <id>Q9UIS9</id>
    </interactant>
    <interactant intactId="EBI-80140">
        <id>P63165</id>
        <label>SUMO1</label>
    </interactant>
    <organismsDiffer>false</organismsDiffer>
    <experiments>3</experiments>
</comment>
<comment type="interaction">
    <interactant intactId="EBI-867196">
        <id>Q9UIS9</id>
    </interactant>
    <interactant intactId="EBI-349968">
        <id>O43463</id>
        <label>SUV39H1</label>
    </interactant>
    <organismsDiffer>false</organismsDiffer>
    <experiments>5</experiments>
</comment>
<comment type="subcellular location">
    <subcellularLocation>
        <location evidence="12 14">Nucleus</location>
    </subcellularLocation>
    <subcellularLocation>
        <location evidence="6 8">Nucleus matrix</location>
    </subcellularLocation>
    <subcellularLocation>
        <location evidence="6 8">Nucleus speckle</location>
    </subcellularLocation>
    <subcellularLocation>
        <location evidence="6 8 12 13">Chromosome</location>
    </subcellularLocation>
    <text evidence="6 8 12">Nuclear, in a punctate pattern (PubMed:12711603). Associated with euchromatic regions of the chromosomes, with pericentromeric regions on chromosome 1 and with telomeric regions from several chromosomes (PubMed:10454587, PubMed:10648624).</text>
</comment>
<comment type="alternative products">
    <event type="alternative splicing"/>
    <isoform>
        <id>Q9UIS9-1</id>
        <name>1</name>
        <name>MBD1v1</name>
        <sequence type="displayed"/>
    </isoform>
    <isoform>
        <id>Q9UIS9-2</id>
        <name>2</name>
        <name>MBD1v2</name>
        <sequence type="described" ref="VSP_011065 VSP_011068 VSP_011070"/>
    </isoform>
    <isoform>
        <id>Q9UIS9-4</id>
        <name>4</name>
        <name>MBD1v3</name>
        <sequence type="described" ref="VSP_011066 VSP_011068"/>
    </isoform>
    <isoform>
        <id>Q9UIS9-5</id>
        <name>5</name>
        <name>PCM1</name>
        <sequence type="described" ref="VSP_011064"/>
    </isoform>
    <isoform>
        <id>Q9UIS9-6</id>
        <name>6</name>
        <name>MBD1v6</name>
        <sequence type="described" ref="VSP_011068 VSP_011069 VSP_011071"/>
    </isoform>
    <isoform>
        <id>Q9UIS9-7</id>
        <name>7</name>
        <sequence type="described" ref="VSP_011066"/>
    </isoform>
    <isoform>
        <id>Q9UIS9-8</id>
        <name>8</name>
        <sequence type="described" ref="VSP_011065 VSP_011068"/>
    </isoform>
    <isoform>
        <id>Q9UIS9-9</id>
        <name>9</name>
        <sequence type="described" ref="VSP_042812"/>
    </isoform>
    <isoform>
        <id>Q9UIS9-10</id>
        <name>10</name>
        <sequence type="described" ref="VSP_011064 VSP_054737 VSP_054738"/>
    </isoform>
    <isoform>
        <id>Q9UIS9-11</id>
        <name>11</name>
        <sequence type="described" ref="VSP_054736 VSP_011068 VSP_054739"/>
    </isoform>
    <isoform>
        <id>Q9UIS9-12</id>
        <name>12</name>
        <sequence type="described" ref="VSP_011070"/>
    </isoform>
</comment>
<comment type="tissue specificity">
    <text evidence="25">Widely expressed.</text>
</comment>
<comment type="induction">
    <text evidence="15">Up-regulated by interferon.</text>
</comment>
<comment type="domain">
    <text evidence="7">The methyl-CpG-binding domain (MBD) functions both in binding to methylated DNA and in protein interactions.</text>
</comment>
<comment type="domain">
    <text evidence="22">The third CXXC-type zinc finger mediates binding to DNA containing unmethylated CpG dinucleotides.</text>
</comment>
<comment type="domain">
    <text evidence="13">The transcriptional repression domain (TRD) is involved in transcription repression and in protein interactions.</text>
</comment>
<comment type="PTM">
    <text evidence="18">Sumoylated, sumoylation may increase interaction with ATF7IP.</text>
</comment>
<comment type="caution">
    <text evidence="16 19 23 24">Was reported to recruit SETDB1 during DNA replication, to form a S phase-specific complex that would facilitate methylation of H3 'Lys-9' during replication-coupled chromatin assembly and vould be at least composed of the CAF-1 subunit CHAF1A, MBD1 and SETDB1 (PubMed:15327775). The interaction with SETDB1 was also reported to be inhibited by sumoylation at Lys-499 and Lys-538 (PubMed:17066076). However, these papers have been retracted because some data, results and conclusions are not reliable (PubMed:30849389, PubMed:31612521).</text>
</comment>
<proteinExistence type="evidence at protein level"/>
<reference key="1">
    <citation type="journal article" date="1997" name="Nat. Genet.">
        <title>A component of the transcriptional repressor MeCP1 shares a motif with DNA methyltransferase and HRX proteins.</title>
        <authorList>
            <person name="Cross S.H."/>
            <person name="Meehan R.R."/>
            <person name="Nan X."/>
            <person name="Bird A."/>
        </authorList>
    </citation>
    <scope>NUCLEOTIDE SEQUENCE [MRNA] (ISOFORM 5)</scope>
    <scope>FUNCTION</scope>
    <scope>INTERACTION WITH THE MECP1 COMPLEX</scope>
    <scope>TISSUE SPECIFICITY</scope>
</reference>
<reference key="2">
    <citation type="journal article" date="1999" name="Mamm. Genome">
        <title>Genomic structure and chromosomal mapping of the murine and human mbd1, mbd2, mbd3, and mbd4 genes.</title>
        <authorList>
            <person name="Hendrich B."/>
            <person name="Abbott C."/>
            <person name="McQueen H."/>
            <person name="Chambers D."/>
            <person name="Cross S.H."/>
            <person name="Bird A."/>
        </authorList>
    </citation>
    <scope>NUCLEOTIDE SEQUENCE [GENOMIC DNA]</scope>
    <scope>VARIANT ALA-401</scope>
</reference>
<reference key="3">
    <citation type="journal article" date="1999" name="Mol. Cell. Biol.">
        <title>Methylation-mediated transcriptional silencing in euchromatin by methyl-CpG binding protein MBD1 isoforms.</title>
        <authorList>
            <person name="Fujita N."/>
            <person name="Takebayashi S."/>
            <person name="Okumura K."/>
            <person name="Kudo S."/>
            <person name="Chiba T."/>
            <person name="Saya H."/>
            <person name="Nakao M."/>
        </authorList>
    </citation>
    <scope>NUCLEOTIDE SEQUENCE [MRNA] (ISOFORMS 1; 2; 4 AND 7)</scope>
    <scope>FUNCTION</scope>
    <scope>SUBCELLULAR LOCATION</scope>
    <source>
        <tissue>Fibroblast</tissue>
    </source>
</reference>
<reference key="4">
    <citation type="journal article" date="2004" name="Eur. J. Biochem.">
        <title>Interaction between the 2'-5' oligoadenylate synthetase-like protein p59 OASL and the transcriptional repressor methyl CpG-binding protein 1.</title>
        <authorList>
            <person name="Andersen J.B."/>
            <person name="Strandbygaard D.J."/>
            <person name="Hartmann R."/>
            <person name="Justesen J."/>
        </authorList>
    </citation>
    <scope>NUCLEOTIDE SEQUENCE (ISOFORM 6)</scope>
    <scope>INDUCTION BY INTERFERON</scope>
    <scope>INTERACTION WITH OASL</scope>
    <source>
        <tissue>Leukocyte</tissue>
    </source>
</reference>
<reference key="5">
    <citation type="submission" date="2007-03" db="EMBL/GenBank/DDBJ databases">
        <title>New splice variant of the methyl-CpG binding protein 1 (MBD1).</title>
        <authorList>
            <person name="Laget S.M."/>
            <person name="Xu S.-Y."/>
        </authorList>
    </citation>
    <scope>NUCLEOTIDE SEQUENCE [MRNA] (ISOFORM 8)</scope>
    <source>
        <tissue>Cervix carcinoma</tissue>
    </source>
</reference>
<reference key="6">
    <citation type="journal article" date="2004" name="Nat. Genet.">
        <title>Complete sequencing and characterization of 21,243 full-length human cDNAs.</title>
        <authorList>
            <person name="Ota T."/>
            <person name="Suzuki Y."/>
            <person name="Nishikawa T."/>
            <person name="Otsuki T."/>
            <person name="Sugiyama T."/>
            <person name="Irie R."/>
            <person name="Wakamatsu A."/>
            <person name="Hayashi K."/>
            <person name="Sato H."/>
            <person name="Nagai K."/>
            <person name="Kimura K."/>
            <person name="Makita H."/>
            <person name="Sekine M."/>
            <person name="Obayashi M."/>
            <person name="Nishi T."/>
            <person name="Shibahara T."/>
            <person name="Tanaka T."/>
            <person name="Ishii S."/>
            <person name="Yamamoto J."/>
            <person name="Saito K."/>
            <person name="Kawai Y."/>
            <person name="Isono Y."/>
            <person name="Nakamura Y."/>
            <person name="Nagahari K."/>
            <person name="Murakami K."/>
            <person name="Yasuda T."/>
            <person name="Iwayanagi T."/>
            <person name="Wagatsuma M."/>
            <person name="Shiratori A."/>
            <person name="Sudo H."/>
            <person name="Hosoiri T."/>
            <person name="Kaku Y."/>
            <person name="Kodaira H."/>
            <person name="Kondo H."/>
            <person name="Sugawara M."/>
            <person name="Takahashi M."/>
            <person name="Kanda K."/>
            <person name="Yokoi T."/>
            <person name="Furuya T."/>
            <person name="Kikkawa E."/>
            <person name="Omura Y."/>
            <person name="Abe K."/>
            <person name="Kamihara K."/>
            <person name="Katsuta N."/>
            <person name="Sato K."/>
            <person name="Tanikawa M."/>
            <person name="Yamazaki M."/>
            <person name="Ninomiya K."/>
            <person name="Ishibashi T."/>
            <person name="Yamashita H."/>
            <person name="Murakawa K."/>
            <person name="Fujimori K."/>
            <person name="Tanai H."/>
            <person name="Kimata M."/>
            <person name="Watanabe M."/>
            <person name="Hiraoka S."/>
            <person name="Chiba Y."/>
            <person name="Ishida S."/>
            <person name="Ono Y."/>
            <person name="Takiguchi S."/>
            <person name="Watanabe S."/>
            <person name="Yosida M."/>
            <person name="Hotuta T."/>
            <person name="Kusano J."/>
            <person name="Kanehori K."/>
            <person name="Takahashi-Fujii A."/>
            <person name="Hara H."/>
            <person name="Tanase T.-O."/>
            <person name="Nomura Y."/>
            <person name="Togiya S."/>
            <person name="Komai F."/>
            <person name="Hara R."/>
            <person name="Takeuchi K."/>
            <person name="Arita M."/>
            <person name="Imose N."/>
            <person name="Musashino K."/>
            <person name="Yuuki H."/>
            <person name="Oshima A."/>
            <person name="Sasaki N."/>
            <person name="Aotsuka S."/>
            <person name="Yoshikawa Y."/>
            <person name="Matsunawa H."/>
            <person name="Ichihara T."/>
            <person name="Shiohata N."/>
            <person name="Sano S."/>
            <person name="Moriya S."/>
            <person name="Momiyama H."/>
            <person name="Satoh N."/>
            <person name="Takami S."/>
            <person name="Terashima Y."/>
            <person name="Suzuki O."/>
            <person name="Nakagawa S."/>
            <person name="Senoh A."/>
            <person name="Mizoguchi H."/>
            <person name="Goto Y."/>
            <person name="Shimizu F."/>
            <person name="Wakebe H."/>
            <person name="Hishigaki H."/>
            <person name="Watanabe T."/>
            <person name="Sugiyama A."/>
            <person name="Takemoto M."/>
            <person name="Kawakami B."/>
            <person name="Yamazaki M."/>
            <person name="Watanabe K."/>
            <person name="Kumagai A."/>
            <person name="Itakura S."/>
            <person name="Fukuzumi Y."/>
            <person name="Fujimori Y."/>
            <person name="Komiyama M."/>
            <person name="Tashiro H."/>
            <person name="Tanigami A."/>
            <person name="Fujiwara T."/>
            <person name="Ono T."/>
            <person name="Yamada K."/>
            <person name="Fujii Y."/>
            <person name="Ozaki K."/>
            <person name="Hirao M."/>
            <person name="Ohmori Y."/>
            <person name="Kawabata A."/>
            <person name="Hikiji T."/>
            <person name="Kobatake N."/>
            <person name="Inagaki H."/>
            <person name="Ikema Y."/>
            <person name="Okamoto S."/>
            <person name="Okitani R."/>
            <person name="Kawakami T."/>
            <person name="Noguchi S."/>
            <person name="Itoh T."/>
            <person name="Shigeta K."/>
            <person name="Senba T."/>
            <person name="Matsumura K."/>
            <person name="Nakajima Y."/>
            <person name="Mizuno T."/>
            <person name="Morinaga M."/>
            <person name="Sasaki M."/>
            <person name="Togashi T."/>
            <person name="Oyama M."/>
            <person name="Hata H."/>
            <person name="Watanabe M."/>
            <person name="Komatsu T."/>
            <person name="Mizushima-Sugano J."/>
            <person name="Satoh T."/>
            <person name="Shirai Y."/>
            <person name="Takahashi Y."/>
            <person name="Nakagawa K."/>
            <person name="Okumura K."/>
            <person name="Nagase T."/>
            <person name="Nomura N."/>
            <person name="Kikuchi H."/>
            <person name="Masuho Y."/>
            <person name="Yamashita R."/>
            <person name="Nakai K."/>
            <person name="Yada T."/>
            <person name="Nakamura Y."/>
            <person name="Ohara O."/>
            <person name="Isogai T."/>
            <person name="Sugano S."/>
        </authorList>
    </citation>
    <scope>NUCLEOTIDE SEQUENCE [LARGE SCALE MRNA] (ISOFORM 9)</scope>
</reference>
<reference key="7">
    <citation type="journal article" date="2005" name="Nature">
        <title>DNA sequence and analysis of human chromosome 18.</title>
        <authorList>
            <person name="Nusbaum C."/>
            <person name="Zody M.C."/>
            <person name="Borowsky M.L."/>
            <person name="Kamal M."/>
            <person name="Kodira C.D."/>
            <person name="Taylor T.D."/>
            <person name="Whittaker C.A."/>
            <person name="Chang J.L."/>
            <person name="Cuomo C.A."/>
            <person name="Dewar K."/>
            <person name="FitzGerald M.G."/>
            <person name="Yang X."/>
            <person name="Abouelleil A."/>
            <person name="Allen N.R."/>
            <person name="Anderson S."/>
            <person name="Bloom T."/>
            <person name="Bugalter B."/>
            <person name="Butler J."/>
            <person name="Cook A."/>
            <person name="DeCaprio D."/>
            <person name="Engels R."/>
            <person name="Garber M."/>
            <person name="Gnirke A."/>
            <person name="Hafez N."/>
            <person name="Hall J.L."/>
            <person name="Norman C.H."/>
            <person name="Itoh T."/>
            <person name="Jaffe D.B."/>
            <person name="Kuroki Y."/>
            <person name="Lehoczky J."/>
            <person name="Lui A."/>
            <person name="Macdonald P."/>
            <person name="Mauceli E."/>
            <person name="Mikkelsen T.S."/>
            <person name="Naylor J.W."/>
            <person name="Nicol R."/>
            <person name="Nguyen C."/>
            <person name="Noguchi H."/>
            <person name="O'Leary S.B."/>
            <person name="Piqani B."/>
            <person name="Smith C.L."/>
            <person name="Talamas J.A."/>
            <person name="Topham K."/>
            <person name="Totoki Y."/>
            <person name="Toyoda A."/>
            <person name="Wain H.M."/>
            <person name="Young S.K."/>
            <person name="Zeng Q."/>
            <person name="Zimmer A.R."/>
            <person name="Fujiyama A."/>
            <person name="Hattori M."/>
            <person name="Birren B.W."/>
            <person name="Sakaki Y."/>
            <person name="Lander E.S."/>
        </authorList>
    </citation>
    <scope>NUCLEOTIDE SEQUENCE [LARGE SCALE GENOMIC DNA]</scope>
</reference>
<reference key="8">
    <citation type="journal article" date="2004" name="Genome Res.">
        <title>The status, quality, and expansion of the NIH full-length cDNA project: the Mammalian Gene Collection (MGC).</title>
        <authorList>
            <consortium name="The MGC Project Team"/>
        </authorList>
    </citation>
    <scope>NUCLEOTIDE SEQUENCE [LARGE SCALE MRNA] (ISOFORM 7)</scope>
    <source>
        <tissue>Prostate</tissue>
    </source>
</reference>
<reference key="9">
    <citation type="journal article" date="1998" name="Mol. Cell. Biol.">
        <title>Identification and characterization of a family of mammalian methyl-CpG binding proteins.</title>
        <authorList>
            <person name="Hendrich B."/>
            <person name="Bird A."/>
        </authorList>
    </citation>
    <scope>NUCLEOTIDE SEQUENCE [MRNA] OF 169-220</scope>
    <scope>FUNCTION</scope>
</reference>
<reference key="10">
    <citation type="journal article" date="2000" name="Mol. Cell. Biol.">
        <title>Active repression of methylated genes by the chromosomal protein MBD1.</title>
        <authorList>
            <person name="Ng H.-H."/>
            <person name="Jeppesen P."/>
            <person name="Bird A."/>
        </authorList>
    </citation>
    <scope>FUNCTION</scope>
    <scope>SUBCELLULAR LOCATION</scope>
</reference>
<reference key="11">
    <citation type="journal article" date="2003" name="J. Biol. Chem.">
        <title>Methyl-CpG binding domain 1 (MBD1) interacts with the Suv39h1-HP1 heterochromatic complex for DNA methylation-based transcriptional repression.</title>
        <authorList>
            <person name="Fujita N."/>
            <person name="Watanabe S."/>
            <person name="Ichimura T."/>
            <person name="Tsuruzoe S."/>
            <person name="Shinkai Y."/>
            <person name="Tachibana M."/>
            <person name="Chiba T."/>
            <person name="Nakao M."/>
        </authorList>
    </citation>
    <scope>FUNCTION</scope>
    <scope>SUBCELLULAR LOCATION</scope>
    <scope>INTERACTION WITH THE SUV39H1-CBX5 COMPLEX</scope>
</reference>
<reference key="12">
    <citation type="journal article" date="2003" name="Mol. Cell. Biol.">
        <title>MCAF mediates MBD1-dependent transcriptional repression.</title>
        <authorList>
            <person name="Fujita N."/>
            <person name="Watanabe S."/>
            <person name="Ichimura T."/>
            <person name="Ohkuma Y."/>
            <person name="Chiba T."/>
            <person name="Saya H."/>
            <person name="Nakao M."/>
        </authorList>
    </citation>
    <scope>FUNCTION</scope>
    <scope>INTERACTION WITH ATF7IP</scope>
</reference>
<reference key="13">
    <citation type="journal article" date="2003" name="Mol. Cell. Biol.">
        <title>The methyl-CpG binding protein MBD1 interacts with the p150 subunit of chromatin assembly factor 1.</title>
        <authorList>
            <person name="Reese B.E."/>
            <person name="Bachman K.E."/>
            <person name="Baylin S.B."/>
            <person name="Rountree M.R."/>
        </authorList>
    </citation>
    <scope>FUNCTION</scope>
    <scope>INTERACTION WITH CHAF1A</scope>
</reference>
<reference key="14">
    <citation type="journal article" date="2004" name="J. Biol. Chem.">
        <title>Role of human ribosomal RNA (rRNA) promoter methylation and of methyl-CpG-binding protein MBD2 in the suppression of rRNA gene expression.</title>
        <authorList>
            <person name="Ghoshal K."/>
            <person name="Majumder S."/>
            <person name="Datta J."/>
            <person name="Motiwala T."/>
            <person name="Bai S."/>
            <person name="Sharma S.M."/>
            <person name="Frankel W."/>
            <person name="Jacob S.T."/>
        </authorList>
    </citation>
    <scope>FUNCTION</scope>
    <scope>SUBCELLULAR LOCATION</scope>
</reference>
<reference key="15">
    <citation type="journal article" date="2004" name="Mol. Cell">
        <title>Methyl-CpG binding protein MBD1 couples histone H3 methylation at lysine 9 by SETDB1 to DNA replication and chromatin assembly.</title>
        <authorList>
            <person name="Sarraf S.A."/>
            <person name="Stancheva I."/>
        </authorList>
    </citation>
    <scope>RETRACTED PAPER</scope>
</reference>
<reference key="16">
    <citation type="journal article" date="2019" name="Mol. Cell">
        <title>Retraction Notice to: Methyl-CpG Binding Protein MBD1 Couples Histone H3 Methylation at Lysine 9 by SETDB1 to DNA Replication and Chromatin Assembly.</title>
        <authorList>
            <person name="Sarraf S.A."/>
            <person name="Stancheva I."/>
        </authorList>
    </citation>
    <scope>RETRACTION NOTICE OF PUBMED:15327775</scope>
</reference>
<reference key="17">
    <citation type="journal article" date="2005" name="J. Biol. Chem.">
        <title>Transcriptional repression and heterochromatin formation by MBD1 and MCAF/AM family proteins.</title>
        <authorList>
            <person name="Ichimura T."/>
            <person name="Watanabe S."/>
            <person name="Sakamoto Y."/>
            <person name="Aoto T."/>
            <person name="Fujita N."/>
            <person name="Nakao M."/>
        </authorList>
    </citation>
    <scope>INTERACTION WITH ATF7IP AND ATF7IP2</scope>
    <scope>MUTAGENESIS OF ILE-576</scope>
</reference>
<reference key="18">
    <citation type="journal article" date="2006" name="EMBO J.">
        <title>Regulation of MBD1-mediated transcriptional repression by SUMO and PIAS proteins.</title>
        <authorList>
            <person name="Lyst M.J."/>
            <person name="Nan X."/>
            <person name="Stancheva I."/>
        </authorList>
    </citation>
    <scope>RETRACTED PAPER</scope>
</reference>
<reference key="19">
    <citation type="journal article" date="2019" name="EMBO J.">
        <title>Retraction: Regulation of MBD1-mediated transcriptional repression by SUMO and PIAS proteins.</title>
        <authorList>
            <person name="Lyst M.J."/>
            <person name="Nan X."/>
            <person name="Stancheva I."/>
        </authorList>
    </citation>
    <scope>RETRACTION NOTICE OF PUBMED:17066076</scope>
</reference>
<reference key="20">
    <citation type="journal article" date="2006" name="J. Biol. Chem.">
        <title>Involvement of SUMO modification in MBD1- and MCAF1-mediated heterochromatin formation.</title>
        <authorList>
            <person name="Uchimura Y."/>
            <person name="Ichimura T."/>
            <person name="Uwada J."/>
            <person name="Tachibana T."/>
            <person name="Sugahara S."/>
            <person name="Nakao M."/>
            <person name="Saitoh H."/>
        </authorList>
    </citation>
    <scope>SUMOYLATION</scope>
    <scope>INTERACTION WITH ATF7IP</scope>
</reference>
<reference key="21">
    <citation type="journal article" date="2008" name="Proc. Natl. Acad. Sci. U.S.A.">
        <title>A quantitative atlas of mitotic phosphorylation.</title>
        <authorList>
            <person name="Dephoure N."/>
            <person name="Zhou C."/>
            <person name="Villen J."/>
            <person name="Beausoleil S.A."/>
            <person name="Bakalarski C.E."/>
            <person name="Elledge S.J."/>
            <person name="Gygi S.P."/>
        </authorList>
    </citation>
    <scope>PHOSPHORYLATION [LARGE SCALE ANALYSIS] AT SER-399</scope>
    <scope>IDENTIFICATION BY MASS SPECTROMETRY [LARGE SCALE ANALYSIS]</scope>
    <source>
        <tissue>Cervix carcinoma</tissue>
    </source>
</reference>
<reference key="22">
    <citation type="journal article" date="2009" name="Proc. Natl. Acad. Sci. U.S.A.">
        <title>Human BAHD1 promotes heterochromatic gene silencing.</title>
        <authorList>
            <person name="Bierne H."/>
            <person name="Tham T.N."/>
            <person name="Batsche E."/>
            <person name="Dumay A."/>
            <person name="Leguillou M."/>
            <person name="Kerneis-Golsteyn S."/>
            <person name="Regnault B."/>
            <person name="Seeler J.S."/>
            <person name="Muchardt C."/>
            <person name="Feunteun J."/>
            <person name="Cossart P."/>
        </authorList>
    </citation>
    <scope>INTERACTION WITH BAHD1</scope>
</reference>
<reference key="23">
    <citation type="journal article" date="2009" name="Sci. Signal.">
        <title>Quantitative phosphoproteomic analysis of T cell receptor signaling reveals system-wide modulation of protein-protein interactions.</title>
        <authorList>
            <person name="Mayya V."/>
            <person name="Lundgren D.H."/>
            <person name="Hwang S.-I."/>
            <person name="Rezaul K."/>
            <person name="Wu L."/>
            <person name="Eng J.K."/>
            <person name="Rodionov V."/>
            <person name="Han D.K."/>
        </authorList>
    </citation>
    <scope>PHOSPHORYLATION [LARGE SCALE ANALYSIS] AT SER-399</scope>
    <scope>IDENTIFICATION BY MASS SPECTROMETRY [LARGE SCALE ANALYSIS]</scope>
    <source>
        <tissue>Leukemic T-cell</tissue>
    </source>
</reference>
<reference key="24">
    <citation type="journal article" date="2010" name="Sci. Signal.">
        <title>Quantitative phosphoproteomics reveals widespread full phosphorylation site occupancy during mitosis.</title>
        <authorList>
            <person name="Olsen J.V."/>
            <person name="Vermeulen M."/>
            <person name="Santamaria A."/>
            <person name="Kumar C."/>
            <person name="Miller M.L."/>
            <person name="Jensen L.J."/>
            <person name="Gnad F."/>
            <person name="Cox J."/>
            <person name="Jensen T.S."/>
            <person name="Nigg E.A."/>
            <person name="Brunak S."/>
            <person name="Mann M."/>
        </authorList>
    </citation>
    <scope>IDENTIFICATION BY MASS SPECTROMETRY [LARGE SCALE ANALYSIS]</scope>
    <source>
        <tissue>Cervix carcinoma</tissue>
    </source>
</reference>
<reference key="25">
    <citation type="journal article" date="2013" name="J. Proteome Res.">
        <title>Toward a comprehensive characterization of a human cancer cell phosphoproteome.</title>
        <authorList>
            <person name="Zhou H."/>
            <person name="Di Palma S."/>
            <person name="Preisinger C."/>
            <person name="Peng M."/>
            <person name="Polat A.N."/>
            <person name="Heck A.J."/>
            <person name="Mohammed S."/>
        </authorList>
    </citation>
    <scope>PHOSPHORYLATION [LARGE SCALE ANALYSIS] AT SER-391</scope>
    <scope>IDENTIFICATION BY MASS SPECTROMETRY [LARGE SCALE ANALYSIS]</scope>
    <source>
        <tissue>Cervix carcinoma</tissue>
    </source>
</reference>
<reference key="26">
    <citation type="journal article" date="2014" name="J. Proteomics">
        <title>An enzyme assisted RP-RPLC approach for in-depth analysis of human liver phosphoproteome.</title>
        <authorList>
            <person name="Bian Y."/>
            <person name="Song C."/>
            <person name="Cheng K."/>
            <person name="Dong M."/>
            <person name="Wang F."/>
            <person name="Huang J."/>
            <person name="Sun D."/>
            <person name="Wang L."/>
            <person name="Ye M."/>
            <person name="Zou H."/>
        </authorList>
    </citation>
    <scope>PHOSPHORYLATION [LARGE SCALE ANALYSIS] AT SER-297</scope>
    <scope>IDENTIFICATION BY MASS SPECTROMETRY [LARGE SCALE ANALYSIS]</scope>
    <source>
        <tissue>Liver</tissue>
    </source>
</reference>
<reference key="27">
    <citation type="journal article" date="2014" name="Nat. Struct. Mol. Biol.">
        <title>Uncovering global SUMOylation signaling networks in a site-specific manner.</title>
        <authorList>
            <person name="Hendriks I.A."/>
            <person name="D'Souza R.C."/>
            <person name="Yang B."/>
            <person name="Verlaan-de Vries M."/>
            <person name="Mann M."/>
            <person name="Vertegaal A.C."/>
        </authorList>
    </citation>
    <scope>SUMOYLATION [LARGE SCALE ANALYSIS] AT LYS-538</scope>
    <scope>IDENTIFICATION BY MASS SPECTROMETRY [LARGE SCALE ANALYSIS]</scope>
</reference>
<reference key="28">
    <citation type="journal article" date="2015" name="Cell Rep.">
        <title>SUMO-2 orchestrates chromatin modifiers in response to DNA damage.</title>
        <authorList>
            <person name="Hendriks I.A."/>
            <person name="Treffers L.W."/>
            <person name="Verlaan-de Vries M."/>
            <person name="Olsen J.V."/>
            <person name="Vertegaal A.C."/>
        </authorList>
    </citation>
    <scope>SUMOYLATION [LARGE SCALE ANALYSIS] AT LYS-538</scope>
    <scope>IDENTIFICATION BY MASS SPECTROMETRY [LARGE SCALE ANALYSIS]</scope>
</reference>
<reference key="29">
    <citation type="journal article" date="2015" name="Mol. Cell. Proteomics">
        <title>System-wide analysis of SUMOylation dynamics in response to replication stress reveals novel small ubiquitin-like modified target proteins and acceptor lysines relevant for genome stability.</title>
        <authorList>
            <person name="Xiao Z."/>
            <person name="Chang J.G."/>
            <person name="Hendriks I.A."/>
            <person name="Sigurdsson J.O."/>
            <person name="Olsen J.V."/>
            <person name="Vertegaal A.C."/>
        </authorList>
    </citation>
    <scope>SUMOYLATION [LARGE SCALE ANALYSIS] AT LYS-277 AND LYS-422</scope>
    <scope>IDENTIFICATION BY MASS SPECTROMETRY [LARGE SCALE ANALYSIS]</scope>
</reference>
<reference key="30">
    <citation type="journal article" date="2017" name="Nat. Struct. Mol. Biol.">
        <title>Site-specific mapping of the human SUMO proteome reveals co-modification with phosphorylation.</title>
        <authorList>
            <person name="Hendriks I.A."/>
            <person name="Lyon D."/>
            <person name="Young C."/>
            <person name="Jensen L.J."/>
            <person name="Vertegaal A.C."/>
            <person name="Nielsen M.L."/>
        </authorList>
    </citation>
    <scope>SUMOYLATION [LARGE SCALE ANALYSIS] AT LYS-117; LYS-277; LYS-422; LYS-440; LYS-499; LYS-538 AND LYS-558</scope>
    <scope>IDENTIFICATION BY MASS SPECTROMETRY [LARGE SCALE ANALYSIS]</scope>
</reference>
<reference key="31">
    <citation type="journal article" date="1999" name="EMBO J.">
        <title>Solution structure of the methyl-CpG-binding domain of the methylation-dependent transcriptional repressor MBD1.</title>
        <authorList>
            <person name="Ohki I."/>
            <person name="Shimotake N."/>
            <person name="Fujita N."/>
            <person name="Nakao M."/>
            <person name="Shirakawa M."/>
        </authorList>
    </citation>
    <scope>STRUCTURE BY NMR OF 1-75 IN COMPLEX WITH METHYLATED DNA</scope>
    <scope>MUTAGENESIS OF ARG-22; ARG-30; ASP-32; TYR-34; ARG-44; SER-45; TYR-52 AND PHE-64</scope>
</reference>
<reference evidence="35" key="32">
    <citation type="journal article" date="2001" name="Cell">
        <title>Solution structure of the methyl-CpG binding domain of human MBD1 in complex with methylated DNA.</title>
        <authorList>
            <person name="Ohki I."/>
            <person name="Shimotake N."/>
            <person name="Fujita N."/>
            <person name="Jee J."/>
            <person name="Ikegami T."/>
            <person name="Nakao M."/>
            <person name="Shirakawa M."/>
        </authorList>
    </citation>
    <scope>STRUCTURE BY NMR OF 1-75 IN COMPLEX WITH METHYLATED DNA</scope>
    <scope>DOMAIN MBD</scope>
    <scope>MUTAGENESIS OF ARG-22; ARG-30; ASP-32; TYR-34; ARG-44; SER-45; LYS-46; TYR-52 AND LYS-65</scope>
</reference>
<reference key="33">
    <citation type="journal article" date="2003" name="Proc. Natl. Acad. Sci. U.S.A.">
        <title>Methylated DNA-binding domain 1 and methylpurine-DNA glycosylase link transcriptional repression and DNA repair in chromatin.</title>
        <authorList>
            <person name="Watanabe S."/>
            <person name="Ichimura T."/>
            <person name="Fujita N."/>
            <person name="Tsuruzoe S."/>
            <person name="Ohki I."/>
            <person name="Shirakawa M."/>
            <person name="Kawasuji M."/>
            <person name="Nakao M."/>
        </authorList>
    </citation>
    <scope>STRUCTURE BY NMR OF 1-75 IN COMPLEX WITH METHYLATED DNA</scope>
    <scope>FUNCTION</scope>
    <scope>SUBCELLULAR LOCATION</scope>
    <scope>INTERACTION WITH MPG</scope>
    <scope>DOMAIN TRD</scope>
</reference>
<reference evidence="36" key="34">
    <citation type="journal article" date="2015" name="J. Biomol. NMR">
        <title>Solution structure of human MBD1 CXXC1.</title>
        <authorList>
            <person name="Thomson R."/>
            <person name="Smith B.O."/>
        </authorList>
    </citation>
    <scope>STRUCTURE BY NMR OF 167-222</scope>
    <scope>DOMAIN CXXC-TYPE 1 ZINC-FINGER</scope>
</reference>
<reference evidence="37" key="35">
    <citation type="journal article" date="2018" name="Structure">
        <title>DNA Sequence Recognition of Human CXXC Domains and Their Structural Determinants.</title>
        <authorList>
            <person name="Xu C."/>
            <person name="Liu K."/>
            <person name="Lei M."/>
            <person name="Yang A."/>
            <person name="Li Y."/>
            <person name="Hughes T.R."/>
            <person name="Min J."/>
        </authorList>
    </citation>
    <scope>X-RAY CRYSTALLOGRAPHY (1.80 ANGSTROMS) OF 330-388 IN COMPLEX WITH CPG DNA</scope>
    <scope>DOMAIN CXXC-TYPE 3 ZINC-FINGER</scope>
    <scope>ZINC-BINDING</scope>
</reference>
<reference evidence="38" key="36">
    <citation type="submission" date="2018-04" db="PDB data bank">
        <title>Complex of MBD1-MBD and methylated DNA.</title>
        <authorList>
            <consortium name="Structural genomics consortium (SGC)"/>
        </authorList>
    </citation>
    <scope>X-RAY CRYSTALLOGRAPHY (2.25 ANGSTROMS) OF 1-77 IN COMPLEX WITH METHYLATED DNA</scope>
    <scope>DOMAIN MBD</scope>
</reference>
<sequence>MAEDWLDCPALGPGWKRREVFRKSGATCGRSDTYYQSPTGDRIRSKVELTRYLGPACDLTLFDFKQGILCYPAPKAHPVAVASKKRKKPSRPAKTRKRQVGPQSGEVRKEAPRDETKADTDTAPASFPAPGCCENCGISFSGDGTQRQRLKTLCKDCRAQRIAFNREQRMFKRVGCGECAACQVTEDCGACSTCLLQLPHDVASGLFCKCERRRCLRIVERSRGCGVCRGCQTQEDCGHCPICLRPPRPGLRRQWKCVQRRCLRGKHARRKGGCDSKMAARRRPGAQPLPPPPPSQSPEPTEPHPRALAPSPPAEFIYYCVDEDELQPYTNRRQNRKCGACAACLRRMDCGRCDFCCDKPKFGGSNQKRQKCRWRQCLQFAMKRLLPSVWSESEDGAGSPPPYRRRKRPSSARRHHLGPTLKPTLATRTAQPDHTQAPTKQEAGGGFVLPPPGTDLVFLREGASSPVQVPGPVAASTEALLQEAQCSGLSWVVALPQVKQEKADTQDEWTPGTAVLTSPVLVPGCPSKAVDPGLPSVKQEPPDPEEDKEENKDDSASKLAPEEEAGGAGTPVITEIFSLGGTRFRDTAVWLPRSKDLKKPGARKQ</sequence>
<gene>
    <name evidence="34" type="primary">MBD1</name>
    <name type="synonym">CXXC3</name>
    <name type="synonym">PCM1</name>
</gene>
<feature type="chain" id="PRO_0000096258" description="Methyl-CpG-binding domain protein 1">
    <location>
        <begin position="1"/>
        <end position="605"/>
    </location>
</feature>
<feature type="domain" description="MBD" evidence="2 7 9 27">
    <location>
        <begin position="1"/>
        <end position="69"/>
    </location>
</feature>
<feature type="zinc finger region" description="CXXC-type 1" evidence="3 21">
    <location>
        <begin position="169"/>
        <end position="216"/>
    </location>
</feature>
<feature type="zinc finger region" description="CXXC-type 2" evidence="3">
    <location>
        <begin position="217"/>
        <end position="263"/>
    </location>
</feature>
<feature type="zinc finger region" description="CXXC-type 3" evidence="3 22">
    <location>
        <begin position="330"/>
        <end position="378"/>
    </location>
</feature>
<feature type="region of interest" description="Disordered" evidence="4">
    <location>
        <begin position="80"/>
        <end position="123"/>
    </location>
</feature>
<feature type="region of interest" description="Disordered" evidence="4">
    <location>
        <begin position="269"/>
        <end position="308"/>
    </location>
</feature>
<feature type="region of interest" description="Disordered" evidence="4">
    <location>
        <begin position="391"/>
        <end position="451"/>
    </location>
</feature>
<feature type="region of interest" description="Disordered" evidence="4">
    <location>
        <begin position="520"/>
        <end position="573"/>
    </location>
</feature>
<feature type="region of interest" description="Transcriptional repression domain (TRD)" evidence="13">
    <location>
        <begin position="529"/>
        <end position="592"/>
    </location>
</feature>
<feature type="short sequence motif" description="Nuclear localization signal" evidence="1">
    <location>
        <begin position="84"/>
        <end position="88"/>
    </location>
</feature>
<feature type="compositionally biased region" description="Basic residues" evidence="4">
    <location>
        <begin position="83"/>
        <end position="99"/>
    </location>
</feature>
<feature type="compositionally biased region" description="Basic and acidic residues" evidence="4">
    <location>
        <begin position="106"/>
        <end position="120"/>
    </location>
</feature>
<feature type="compositionally biased region" description="Pro residues" evidence="4">
    <location>
        <begin position="287"/>
        <end position="297"/>
    </location>
</feature>
<feature type="compositionally biased region" description="Basic residues" evidence="4">
    <location>
        <begin position="403"/>
        <end position="417"/>
    </location>
</feature>
<feature type="compositionally biased region" description="Polar residues" evidence="4">
    <location>
        <begin position="426"/>
        <end position="439"/>
    </location>
</feature>
<feature type="binding site" evidence="3">
    <location>
        <position position="176"/>
    </location>
    <ligand>
        <name>Zn(2+)</name>
        <dbReference type="ChEBI" id="CHEBI:29105"/>
        <label>1</label>
    </ligand>
</feature>
<feature type="binding site" evidence="3">
    <location>
        <position position="179"/>
    </location>
    <ligand>
        <name>Zn(2+)</name>
        <dbReference type="ChEBI" id="CHEBI:29105"/>
        <label>1</label>
    </ligand>
</feature>
<feature type="binding site" evidence="3">
    <location>
        <position position="182"/>
    </location>
    <ligand>
        <name>Zn(2+)</name>
        <dbReference type="ChEBI" id="CHEBI:29105"/>
        <label>1</label>
    </ligand>
</feature>
<feature type="binding site" evidence="3">
    <location>
        <position position="188"/>
    </location>
    <ligand>
        <name>Zn(2+)</name>
        <dbReference type="ChEBI" id="CHEBI:29105"/>
        <label>2</label>
    </ligand>
</feature>
<feature type="binding site" evidence="3">
    <location>
        <position position="191"/>
    </location>
    <ligand>
        <name>Zn(2+)</name>
        <dbReference type="ChEBI" id="CHEBI:29105"/>
        <label>2</label>
    </ligand>
</feature>
<feature type="binding site" evidence="3">
    <location>
        <position position="194"/>
    </location>
    <ligand>
        <name>Zn(2+)</name>
        <dbReference type="ChEBI" id="CHEBI:29105"/>
        <label>2</label>
    </ligand>
</feature>
<feature type="binding site" evidence="3">
    <location>
        <position position="210"/>
    </location>
    <ligand>
        <name>Zn(2+)</name>
        <dbReference type="ChEBI" id="CHEBI:29105"/>
        <label>2</label>
    </ligand>
</feature>
<feature type="binding site" evidence="3">
    <location>
        <position position="215"/>
    </location>
    <ligand>
        <name>Zn(2+)</name>
        <dbReference type="ChEBI" id="CHEBI:29105"/>
        <label>1</label>
    </ligand>
</feature>
<feature type="binding site" evidence="3">
    <location>
        <position position="225"/>
    </location>
    <ligand>
        <name>Zn(2+)</name>
        <dbReference type="ChEBI" id="CHEBI:29105"/>
        <label>3</label>
    </ligand>
</feature>
<feature type="binding site" evidence="3">
    <location>
        <position position="228"/>
    </location>
    <ligand>
        <name>Zn(2+)</name>
        <dbReference type="ChEBI" id="CHEBI:29105"/>
        <label>3</label>
    </ligand>
</feature>
<feature type="binding site" evidence="3">
    <location>
        <position position="231"/>
    </location>
    <ligand>
        <name>Zn(2+)</name>
        <dbReference type="ChEBI" id="CHEBI:29105"/>
        <label>3</label>
    </ligand>
</feature>
<feature type="binding site" evidence="3">
    <location>
        <position position="237"/>
    </location>
    <ligand>
        <name>Zn(2+)</name>
        <dbReference type="ChEBI" id="CHEBI:29105"/>
        <label>4</label>
    </ligand>
</feature>
<feature type="binding site" evidence="3">
    <location>
        <position position="240"/>
    </location>
    <ligand>
        <name>Zn(2+)</name>
        <dbReference type="ChEBI" id="CHEBI:29105"/>
        <label>4</label>
    </ligand>
</feature>
<feature type="binding site" evidence="3">
    <location>
        <position position="243"/>
    </location>
    <ligand>
        <name>Zn(2+)</name>
        <dbReference type="ChEBI" id="CHEBI:29105"/>
        <label>4</label>
    </ligand>
</feature>
<feature type="binding site" evidence="3">
    <location>
        <position position="257"/>
    </location>
    <ligand>
        <name>Zn(2+)</name>
        <dbReference type="ChEBI" id="CHEBI:29105"/>
        <label>4</label>
    </ligand>
</feature>
<feature type="binding site" evidence="3">
    <location>
        <position position="262"/>
    </location>
    <ligand>
        <name>Zn(2+)</name>
        <dbReference type="ChEBI" id="CHEBI:29105"/>
        <label>3</label>
    </ligand>
</feature>
<feature type="binding site" evidence="3 22 37">
    <location>
        <position position="338"/>
    </location>
    <ligand>
        <name>Zn(2+)</name>
        <dbReference type="ChEBI" id="CHEBI:29105"/>
        <label>5</label>
    </ligand>
</feature>
<feature type="binding site" evidence="3 22 37">
    <location>
        <position position="341"/>
    </location>
    <ligand>
        <name>Zn(2+)</name>
        <dbReference type="ChEBI" id="CHEBI:29105"/>
        <label>5</label>
    </ligand>
</feature>
<feature type="binding site" evidence="3 22 37">
    <location>
        <position position="344"/>
    </location>
    <ligand>
        <name>Zn(2+)</name>
        <dbReference type="ChEBI" id="CHEBI:29105"/>
        <label>5</label>
    </ligand>
</feature>
<feature type="binding site" evidence="3 22 37">
    <location>
        <position position="350"/>
    </location>
    <ligand>
        <name>Zn(2+)</name>
        <dbReference type="ChEBI" id="CHEBI:29105"/>
        <label>6</label>
    </ligand>
</feature>
<feature type="binding site" evidence="3 22 37">
    <location>
        <position position="353"/>
    </location>
    <ligand>
        <name>Zn(2+)</name>
        <dbReference type="ChEBI" id="CHEBI:29105"/>
        <label>6</label>
    </ligand>
</feature>
<feature type="binding site" evidence="3 22 37">
    <location>
        <position position="356"/>
    </location>
    <ligand>
        <name>Zn(2+)</name>
        <dbReference type="ChEBI" id="CHEBI:29105"/>
        <label>6</label>
    </ligand>
</feature>
<feature type="binding site" evidence="3 22 37">
    <location>
        <position position="372"/>
    </location>
    <ligand>
        <name>Zn(2+)</name>
        <dbReference type="ChEBI" id="CHEBI:29105"/>
        <label>6</label>
    </ligand>
</feature>
<feature type="binding site" evidence="3 22 37">
    <location>
        <position position="377"/>
    </location>
    <ligand>
        <name>Zn(2+)</name>
        <dbReference type="ChEBI" id="CHEBI:29105"/>
        <label>5</label>
    </ligand>
</feature>
<feature type="modified residue" description="Phosphoserine" evidence="42">
    <location>
        <position position="297"/>
    </location>
</feature>
<feature type="modified residue" description="Phosphoserine" evidence="41">
    <location>
        <position position="391"/>
    </location>
</feature>
<feature type="modified residue" description="Phosphoserine" evidence="39 40">
    <location>
        <position position="399"/>
    </location>
</feature>
<feature type="cross-link" description="Glycyl lysine isopeptide (Lys-Gly) (interchain with G-Cter in SUMO2)" evidence="46">
    <location>
        <position position="117"/>
    </location>
</feature>
<feature type="cross-link" description="Glycyl lysine isopeptide (Lys-Gly) (interchain with G-Cter in SUMO2)" evidence="44 46">
    <location>
        <position position="277"/>
    </location>
</feature>
<feature type="cross-link" description="Glycyl lysine isopeptide (Lys-Gly) (interchain with G-Cter in SUMO2)" evidence="44 46">
    <location>
        <position position="422"/>
    </location>
</feature>
<feature type="cross-link" description="Glycyl lysine isopeptide (Lys-Gly) (interchain with G-Cter in SUMO2)" evidence="46">
    <location>
        <position position="440"/>
    </location>
</feature>
<feature type="cross-link" description="Glycyl lysine isopeptide (Lys-Gly) (interchain with G-Cter in SUMO2); alternate" evidence="46">
    <location>
        <position position="499"/>
    </location>
</feature>
<feature type="cross-link" description="Glycyl lysine isopeptide (Lys-Gly) (interchain with G-Cter in SUMO2); alternate" evidence="43 45 46">
    <location>
        <position position="538"/>
    </location>
</feature>
<feature type="cross-link" description="Glycyl lysine isopeptide (Lys-Gly) (interchain with G-Cter in SUMO2)" evidence="46">
    <location>
        <position position="558"/>
    </location>
</feature>
<feature type="splice variant" id="VSP_011064" description="In isoform 5 and isoform 10." evidence="31">
    <location>
        <begin position="173"/>
        <end position="221"/>
    </location>
</feature>
<feature type="splice variant" id="VSP_042812" description="In isoform 9." evidence="29">
    <original>R</original>
    <variation>RHLAHRLRRRHQRCQRRTPLAVAPPT</variation>
    <location>
        <position position="264"/>
    </location>
</feature>
<feature type="splice variant" id="VSP_011065" description="In isoform 2 and isoform 8." evidence="28 32">
    <location>
        <begin position="304"/>
        <end position="326"/>
    </location>
</feature>
<feature type="splice variant" id="VSP_054736" description="In isoform 11." evidence="33">
    <original>LQPYTNRRQNRKCGACAACLRRMDCGRCDFCCDKPKFGGSNQKRQKCRWRQCLQFAM</original>
    <variation>L</variation>
    <location>
        <begin position="326"/>
        <end position="382"/>
    </location>
</feature>
<feature type="splice variant" id="VSP_011066" description="In isoform 4 and isoform 7." evidence="28 30">
    <location>
        <begin position="327"/>
        <end position="382"/>
    </location>
</feature>
<feature type="splice variant" id="VSP_054737" description="In isoform 10." evidence="33">
    <location>
        <position position="327"/>
    </location>
</feature>
<feature type="splice variant" id="VSP_011068" description="In isoform 2, isoform 4, isoform 6, isoform 8 and isoform 11." evidence="28 32">
    <location>
        <begin position="483"/>
        <end position="528"/>
    </location>
</feature>
<feature type="splice variant" id="VSP_011069" description="In isoform 6." evidence="33">
    <original>ITEIFSLGGTRFRDTAVWLPRSKD</original>
    <variation>EPTTQPQYSGNFDNDLYEIYLIDI</variation>
    <location>
        <begin position="573"/>
        <end position="596"/>
    </location>
</feature>
<feature type="splice variant" id="VSP_011070" description="In isoform 2 and isoform 12." evidence="28">
    <original>RSKDLKKPGARKQ</original>
    <variation>SLQGRHSGREDGCKVWETEDTVEPTSTSWNPRGWPGTHVSLSPPPASMMWVSCRRSWCPSSQS</variation>
    <location>
        <begin position="593"/>
        <end position="605"/>
    </location>
</feature>
<feature type="splice variant" id="VSP_054738" description="In isoform 10." evidence="33">
    <original>SKDLKKPGARKQ</original>
    <variation>YYHLALDWKCNCGYHLCCRSVLVP</variation>
    <location>
        <begin position="594"/>
        <end position="605"/>
    </location>
</feature>
<feature type="splice variant" id="VSP_054739" description="In isoform 11." evidence="33">
    <original>SKDLKKPGARKQ</original>
    <variation>AGTREGKMDVKCGRPRTQWSPRARAGTHEDGLEPMSVSHHLQLR</variation>
    <location>
        <begin position="594"/>
        <end position="605"/>
    </location>
</feature>
<feature type="splice variant" id="VSP_011071" description="In isoform 6." evidence="33">
    <location>
        <begin position="597"/>
        <end position="605"/>
    </location>
</feature>
<feature type="sequence variant" id="VAR_019513" description="In dbSNP:rs125555." evidence="5">
    <original>P</original>
    <variation>A</variation>
    <location>
        <position position="401"/>
    </location>
</feature>
<feature type="mutagenesis site" description="Abolishes binding to methylated DNA." evidence="7 9">
    <original>R</original>
    <variation>A</variation>
    <variation>K</variation>
    <location>
        <position position="22"/>
    </location>
</feature>
<feature type="mutagenesis site" description="Strongly reduces binding to methylated DNA." evidence="7 9">
    <original>R</original>
    <variation>A</variation>
    <location>
        <position position="30"/>
    </location>
</feature>
<feature type="mutagenesis site" description="No loss of binding to methylated DNA." evidence="9">
    <original>R</original>
    <variation>K</variation>
    <location>
        <position position="30"/>
    </location>
</feature>
<feature type="mutagenesis site" description="Strongly reduces binding to methylated DNA." evidence="7 9">
    <original>D</original>
    <variation>A</variation>
    <location>
        <position position="32"/>
    </location>
</feature>
<feature type="mutagenesis site" description="Strongly reduces binding to methylated DNA." evidence="7 9">
    <original>Y</original>
    <variation>A</variation>
    <variation>F</variation>
    <location>
        <position position="34"/>
    </location>
</feature>
<feature type="mutagenesis site" description="Abolishes binding to methylated DNA." evidence="7 9">
    <original>R</original>
    <variation>A</variation>
    <variation>K</variation>
    <location>
        <position position="44"/>
    </location>
</feature>
<feature type="mutagenesis site" description="Reduces binding to methylated DNA." evidence="7 9">
    <original>S</original>
    <variation>A</variation>
    <location>
        <position position="45"/>
    </location>
</feature>
<feature type="mutagenesis site" description="Strongly reduces binding to methylated DNA." evidence="9">
    <original>K</original>
    <variation>A</variation>
    <location>
        <position position="46"/>
    </location>
</feature>
<feature type="mutagenesis site" description="No loss of binding to methylated DNA." evidence="7 9">
    <original>Y</original>
    <variation>A</variation>
    <location>
        <position position="52"/>
    </location>
</feature>
<feature type="mutagenesis site" description="Disrupts tertiary structure and abolishes DNA binding." evidence="7">
    <original>F</original>
    <variation>A</variation>
    <location>
        <position position="64"/>
    </location>
</feature>
<feature type="mutagenesis site" description="Strongly reduces binding to methylated DNA." evidence="9">
    <original>K</original>
    <variation>A</variation>
    <location>
        <position position="65"/>
    </location>
</feature>
<feature type="mutagenesis site" description="Abolishes interaction with ATF7IP and subsequent transcription repression activity." evidence="17">
    <original>I</original>
    <variation>R</variation>
    <location>
        <position position="576"/>
    </location>
</feature>
<feature type="sequence conflict" description="In Ref. 5; ABP02056." evidence="33" ref="5">
    <original>H</original>
    <variation>R</variation>
    <location>
        <position position="239"/>
    </location>
</feature>
<feature type="sequence conflict" description="In Ref. 5; ABP02056." evidence="33" ref="5">
    <original>T</original>
    <variation>M</variation>
    <location>
        <position position="330"/>
    </location>
</feature>
<feature type="sequence conflict" description="In Ref. 1; CAA71735 and 3; AAD51442/AAD51443." evidence="33" ref="1 3">
    <original>MD</original>
    <variation>NG</variation>
    <location>
        <begin position="348"/>
        <end position="349"/>
    </location>
</feature>
<feature type="sequence conflict" description="In Ref. 1; CAA71735." evidence="33" ref="1">
    <original>L</original>
    <variation>M</variation>
    <location>
        <position position="489"/>
    </location>
</feature>
<feature type="strand" evidence="48">
    <location>
        <begin position="5"/>
        <end position="7"/>
    </location>
</feature>
<feature type="turn" evidence="51">
    <location>
        <begin position="9"/>
        <end position="11"/>
    </location>
</feature>
<feature type="strand" evidence="51">
    <location>
        <begin position="16"/>
        <end position="21"/>
    </location>
</feature>
<feature type="turn" evidence="51">
    <location>
        <begin position="26"/>
        <end position="29"/>
    </location>
</feature>
<feature type="strand" evidence="51">
    <location>
        <begin position="31"/>
        <end position="36"/>
    </location>
</feature>
<feature type="strand" evidence="47">
    <location>
        <begin position="38"/>
        <end position="40"/>
    </location>
</feature>
<feature type="helix" evidence="51">
    <location>
        <begin position="46"/>
        <end position="53"/>
    </location>
</feature>
<feature type="strand" evidence="48">
    <location>
        <begin position="55"/>
        <end position="57"/>
    </location>
</feature>
<feature type="turn" evidence="51">
    <location>
        <begin position="64"/>
        <end position="67"/>
    </location>
</feature>
<feature type="strand" evidence="49">
    <location>
        <begin position="177"/>
        <end position="179"/>
    </location>
</feature>
<feature type="helix" evidence="49">
    <location>
        <begin position="180"/>
        <end position="183"/>
    </location>
</feature>
<feature type="helix" evidence="49">
    <location>
        <begin position="194"/>
        <end position="196"/>
    </location>
</feature>
<feature type="strand" evidence="50">
    <location>
        <begin position="339"/>
        <end position="341"/>
    </location>
</feature>
<feature type="helix" evidence="50">
    <location>
        <begin position="342"/>
        <end position="345"/>
    </location>
</feature>
<feature type="strand" evidence="50">
    <location>
        <begin position="351"/>
        <end position="353"/>
    </location>
</feature>
<feature type="helix" evidence="50">
    <location>
        <begin position="354"/>
        <end position="358"/>
    </location>
</feature>
<feature type="helix" evidence="50">
    <location>
        <begin position="360"/>
        <end position="362"/>
    </location>
</feature>
<feature type="helix" evidence="50">
    <location>
        <begin position="373"/>
        <end position="375"/>
    </location>
</feature>
<feature type="turn" evidence="50">
    <location>
        <begin position="378"/>
        <end position="380"/>
    </location>
</feature>
<feature type="helix" evidence="50">
    <location>
        <begin position="383"/>
        <end position="385"/>
    </location>
</feature>
<feature type="sequence conflict" description="In Ref. 3; AAD51444." evidence="33" ref="3">
    <original>K</original>
    <variation>Q</variation>
    <location sequence="Q9UIS9-7">
        <position position="327"/>
    </location>
</feature>
<dbReference type="EMBL" id="Y10746">
    <property type="protein sequence ID" value="CAA71735.1"/>
    <property type="molecule type" value="mRNA"/>
</dbReference>
<dbReference type="EMBL" id="AF120981">
    <property type="protein sequence ID" value="AAD50371.1"/>
    <property type="molecule type" value="Genomic_DNA"/>
</dbReference>
<dbReference type="EMBL" id="AF120980">
    <property type="protein sequence ID" value="AAD50371.1"/>
    <property type="status" value="JOINED"/>
    <property type="molecule type" value="Genomic_DNA"/>
</dbReference>
<dbReference type="EMBL" id="AF078830">
    <property type="protein sequence ID" value="AAD51442.1"/>
    <property type="molecule type" value="mRNA"/>
</dbReference>
<dbReference type="EMBL" id="AF078831">
    <property type="protein sequence ID" value="AAD51443.1"/>
    <property type="molecule type" value="mRNA"/>
</dbReference>
<dbReference type="EMBL" id="AF078832">
    <property type="protein sequence ID" value="AAD51444.1"/>
    <property type="molecule type" value="mRNA"/>
</dbReference>
<dbReference type="EMBL" id="AF078833">
    <property type="protein sequence ID" value="AAD51445.1"/>
    <property type="molecule type" value="mRNA"/>
</dbReference>
<dbReference type="EMBL" id="EF488685">
    <property type="protein sequence ID" value="ABP02056.1"/>
    <property type="molecule type" value="mRNA"/>
</dbReference>
<dbReference type="EMBL" id="AK302004">
    <property type="protein sequence ID" value="BAG63407.1"/>
    <property type="molecule type" value="mRNA"/>
</dbReference>
<dbReference type="EMBL" id="AC090246">
    <property type="status" value="NOT_ANNOTATED_CDS"/>
    <property type="molecule type" value="Genomic_DNA"/>
</dbReference>
<dbReference type="EMBL" id="BC033242">
    <property type="protein sequence ID" value="AAH33242.1"/>
    <property type="molecule type" value="mRNA"/>
</dbReference>
<dbReference type="EMBL" id="AJ564845">
    <property type="protein sequence ID" value="CAD92308.1"/>
    <property type="molecule type" value="mRNA"/>
</dbReference>
<dbReference type="EMBL" id="AF072241">
    <property type="protein sequence ID" value="AAC68870.1"/>
    <property type="molecule type" value="mRNA"/>
</dbReference>
<dbReference type="CCDS" id="CCDS11941.1">
    <molecule id="Q9UIS9-4"/>
</dbReference>
<dbReference type="CCDS" id="CCDS11942.1">
    <molecule id="Q9UIS9-7"/>
</dbReference>
<dbReference type="CCDS" id="CCDS11943.1">
    <molecule id="Q9UIS9-1"/>
</dbReference>
<dbReference type="CCDS" id="CCDS11944.1">
    <molecule id="Q9UIS9-5"/>
</dbReference>
<dbReference type="CCDS" id="CCDS32832.1">
    <molecule id="Q9UIS9-2"/>
</dbReference>
<dbReference type="CCDS" id="CCDS56071.1">
    <molecule id="Q9UIS9-8"/>
</dbReference>
<dbReference type="CCDS" id="CCDS56072.1">
    <molecule id="Q9UIS9-6"/>
</dbReference>
<dbReference type="CCDS" id="CCDS56073.1">
    <molecule id="Q9UIS9-9"/>
</dbReference>
<dbReference type="CCDS" id="CCDS59318.1">
    <molecule id="Q9UIS9-10"/>
</dbReference>
<dbReference type="CCDS" id="CCDS59319.1">
    <molecule id="Q9UIS9-11"/>
</dbReference>
<dbReference type="CCDS" id="CCDS59320.1">
    <molecule id="Q9UIS9-12"/>
</dbReference>
<dbReference type="RefSeq" id="NP_001191065.1">
    <molecule id="Q9UIS9-12"/>
    <property type="nucleotide sequence ID" value="NM_001204136.2"/>
</dbReference>
<dbReference type="RefSeq" id="NP_001191066.1">
    <molecule id="Q9UIS9-9"/>
    <property type="nucleotide sequence ID" value="NM_001204137.2"/>
</dbReference>
<dbReference type="RefSeq" id="NP_001191067.1">
    <property type="nucleotide sequence ID" value="NM_001204138.1"/>
</dbReference>
<dbReference type="RefSeq" id="NP_001191068.1">
    <molecule id="Q9UIS9-1"/>
    <property type="nucleotide sequence ID" value="NM_001204139.2"/>
</dbReference>
<dbReference type="RefSeq" id="NP_001191069.1">
    <property type="nucleotide sequence ID" value="NM_001204140.1"/>
</dbReference>
<dbReference type="RefSeq" id="NP_001191070.1">
    <molecule id="Q9UIS9-10"/>
    <property type="nucleotide sequence ID" value="NM_001204141.2"/>
</dbReference>
<dbReference type="RefSeq" id="NP_001191071.1">
    <molecule id="Q9UIS9-6"/>
    <property type="nucleotide sequence ID" value="NM_001204142.2"/>
</dbReference>
<dbReference type="RefSeq" id="NP_001191072.1">
    <molecule id="Q9UIS9-11"/>
    <property type="nucleotide sequence ID" value="NM_001204143.2"/>
</dbReference>
<dbReference type="RefSeq" id="NP_001191080.1">
    <molecule id="Q9UIS9-8"/>
    <property type="nucleotide sequence ID" value="NM_001204151.3"/>
</dbReference>
<dbReference type="RefSeq" id="NP_001375067.1">
    <molecule id="Q9UIS9-1"/>
    <property type="nucleotide sequence ID" value="NM_001388138.1"/>
</dbReference>
<dbReference type="RefSeq" id="NP_001375069.1">
    <molecule id="Q9UIS9-9"/>
    <property type="nucleotide sequence ID" value="NM_001388140.1"/>
</dbReference>
<dbReference type="RefSeq" id="NP_001375073.1">
    <molecule id="Q9UIS9-11"/>
    <property type="nucleotide sequence ID" value="NM_001388144.1"/>
</dbReference>
<dbReference type="RefSeq" id="NP_001386815.1">
    <molecule id="Q9UIS9-9"/>
    <property type="nucleotide sequence ID" value="NM_001399886.1"/>
</dbReference>
<dbReference type="RefSeq" id="NP_001386826.1">
    <molecule id="Q9UIS9-1"/>
    <property type="nucleotide sequence ID" value="NM_001399897.1"/>
</dbReference>
<dbReference type="RefSeq" id="NP_001386827.1">
    <molecule id="Q9UIS9-1"/>
    <property type="nucleotide sequence ID" value="NM_001399898.1"/>
</dbReference>
<dbReference type="RefSeq" id="NP_001386870.1">
    <molecule id="Q9UIS9-7"/>
    <property type="nucleotide sequence ID" value="NM_001399941.1"/>
</dbReference>
<dbReference type="RefSeq" id="NP_001386871.1">
    <molecule id="Q9UIS9-7"/>
    <property type="nucleotide sequence ID" value="NM_001399942.1"/>
</dbReference>
<dbReference type="RefSeq" id="NP_001386886.1">
    <molecule id="Q9UIS9-4"/>
    <property type="nucleotide sequence ID" value="NM_001399957.1"/>
</dbReference>
<dbReference type="RefSeq" id="NP_002375.1">
    <molecule id="Q9UIS9-4"/>
    <property type="nucleotide sequence ID" value="NM_002384.3"/>
</dbReference>
<dbReference type="RefSeq" id="NP_056669.2">
    <molecule id="Q9UIS9-7"/>
    <property type="nucleotide sequence ID" value="NM_015844.3"/>
</dbReference>
<dbReference type="RefSeq" id="NP_056670.2">
    <molecule id="Q9UIS9-2"/>
    <property type="nucleotide sequence ID" value="NM_015845.3"/>
</dbReference>
<dbReference type="RefSeq" id="NP_056671.2">
    <molecule id="Q9UIS9-1"/>
    <property type="nucleotide sequence ID" value="NM_015846.3"/>
</dbReference>
<dbReference type="RefSeq" id="NP_056723.2">
    <molecule id="Q9UIS9-5"/>
    <property type="nucleotide sequence ID" value="NM_015847.3"/>
</dbReference>
<dbReference type="RefSeq" id="XP_005258328.1">
    <molecule id="Q9UIS9-1"/>
    <property type="nucleotide sequence ID" value="XM_005258271.4"/>
</dbReference>
<dbReference type="RefSeq" id="XP_011524295.1">
    <property type="nucleotide sequence ID" value="XM_011525993.2"/>
</dbReference>
<dbReference type="RefSeq" id="XP_011524296.1">
    <property type="nucleotide sequence ID" value="XM_011525994.2"/>
</dbReference>
<dbReference type="RefSeq" id="XP_011524308.1">
    <property type="nucleotide sequence ID" value="XM_011526006.1"/>
</dbReference>
<dbReference type="RefSeq" id="XP_016881249.1">
    <property type="nucleotide sequence ID" value="XM_017025760.1"/>
</dbReference>
<dbReference type="RefSeq" id="XP_016881259.1">
    <molecule id="Q9UIS9-7"/>
    <property type="nucleotide sequence ID" value="XM_017025770.3"/>
</dbReference>
<dbReference type="RefSeq" id="XP_016881260.1">
    <property type="nucleotide sequence ID" value="XM_017025771.1"/>
</dbReference>
<dbReference type="RefSeq" id="XP_016881265.1">
    <molecule id="Q9UIS9-4"/>
    <property type="nucleotide sequence ID" value="XM_017025776.3"/>
</dbReference>
<dbReference type="RefSeq" id="XP_054174603.1">
    <molecule id="Q9UIS9-1"/>
    <property type="nucleotide sequence ID" value="XM_054318628.1"/>
</dbReference>
<dbReference type="RefSeq" id="XP_054174613.1">
    <molecule id="Q9UIS9-7"/>
    <property type="nucleotide sequence ID" value="XM_054318638.1"/>
</dbReference>
<dbReference type="RefSeq" id="XP_054174616.1">
    <molecule id="Q9UIS9-4"/>
    <property type="nucleotide sequence ID" value="XM_054318641.1"/>
</dbReference>
<dbReference type="PDB" id="1D9N">
    <property type="method" value="NMR"/>
    <property type="chains" value="A=1-75"/>
</dbReference>
<dbReference type="PDB" id="1IG4">
    <property type="method" value="NMR"/>
    <property type="chains" value="A=1-75"/>
</dbReference>
<dbReference type="PDB" id="4D4W">
    <property type="method" value="NMR"/>
    <property type="chains" value="A=167-222"/>
</dbReference>
<dbReference type="PDB" id="5W9Q">
    <property type="method" value="X-ray"/>
    <property type="resolution" value="1.80 A"/>
    <property type="chains" value="A/B=330-388"/>
</dbReference>
<dbReference type="PDB" id="6D1T">
    <property type="method" value="X-ray"/>
    <property type="resolution" value="2.25 A"/>
    <property type="chains" value="A=1-77"/>
</dbReference>
<dbReference type="PDBsum" id="1D9N"/>
<dbReference type="PDBsum" id="1IG4"/>
<dbReference type="PDBsum" id="4D4W"/>
<dbReference type="PDBsum" id="5W9Q"/>
<dbReference type="PDBsum" id="6D1T"/>
<dbReference type="BMRB" id="Q9UIS9"/>
<dbReference type="SMR" id="Q9UIS9"/>
<dbReference type="BioGRID" id="110322">
    <property type="interactions" value="73"/>
</dbReference>
<dbReference type="CORUM" id="Q9UIS9"/>
<dbReference type="FunCoup" id="Q9UIS9">
    <property type="interactions" value="3326"/>
</dbReference>
<dbReference type="IntAct" id="Q9UIS9">
    <property type="interactions" value="50"/>
</dbReference>
<dbReference type="MINT" id="Q9UIS9"/>
<dbReference type="STRING" id="9606.ENSP00000468785"/>
<dbReference type="GlyGen" id="Q9UIS9">
    <property type="glycosylation" value="1 site, 1 O-linked glycan (1 site)"/>
</dbReference>
<dbReference type="iPTMnet" id="Q9UIS9"/>
<dbReference type="PhosphoSitePlus" id="Q9UIS9"/>
<dbReference type="SwissPalm" id="Q9UIS9"/>
<dbReference type="BioMuta" id="MBD1"/>
<dbReference type="DMDM" id="50401200"/>
<dbReference type="jPOST" id="Q9UIS9"/>
<dbReference type="MassIVE" id="Q9UIS9"/>
<dbReference type="PaxDb" id="9606-ENSP00000468785"/>
<dbReference type="PeptideAtlas" id="Q9UIS9"/>
<dbReference type="ProteomicsDB" id="84560">
    <molecule id="Q9UIS9-1"/>
</dbReference>
<dbReference type="ProteomicsDB" id="84561">
    <molecule id="Q9UIS9-2"/>
</dbReference>
<dbReference type="ProteomicsDB" id="84562">
    <molecule id="Q9UIS9-4"/>
</dbReference>
<dbReference type="ProteomicsDB" id="84563">
    <molecule id="Q9UIS9-5"/>
</dbReference>
<dbReference type="ProteomicsDB" id="84564">
    <molecule id="Q9UIS9-6"/>
</dbReference>
<dbReference type="ProteomicsDB" id="84565">
    <molecule id="Q9UIS9-7"/>
</dbReference>
<dbReference type="ProteomicsDB" id="84566">
    <molecule id="Q9UIS9-8"/>
</dbReference>
<dbReference type="ProteomicsDB" id="84567">
    <molecule id="Q9UIS9-9"/>
</dbReference>
<dbReference type="Pumba" id="Q9UIS9"/>
<dbReference type="Antibodypedia" id="3959">
    <property type="antibodies" value="441 antibodies from 33 providers"/>
</dbReference>
<dbReference type="CPTC" id="Q9UIS9">
    <property type="antibodies" value="3 antibodies"/>
</dbReference>
<dbReference type="DNASU" id="4152"/>
<dbReference type="Ensembl" id="ENST00000269468.10">
    <molecule id="Q9UIS9-1"/>
    <property type="protein sequence ID" value="ENSP00000269468.5"/>
    <property type="gene ID" value="ENSG00000141644.19"/>
</dbReference>
<dbReference type="Ensembl" id="ENST00000269471.9">
    <molecule id="Q9UIS9-2"/>
    <property type="protein sequence ID" value="ENSP00000269471.5"/>
    <property type="gene ID" value="ENSG00000141644.19"/>
</dbReference>
<dbReference type="Ensembl" id="ENST00000339998.10">
    <molecule id="Q9UIS9-6"/>
    <property type="protein sequence ID" value="ENSP00000339546.5"/>
    <property type="gene ID" value="ENSG00000141644.19"/>
</dbReference>
<dbReference type="Ensembl" id="ENST00000347968.7">
    <molecule id="Q9UIS9-7"/>
    <property type="protein sequence ID" value="ENSP00000285102.5"/>
    <property type="gene ID" value="ENSG00000141644.19"/>
</dbReference>
<dbReference type="Ensembl" id="ENST00000353909.7">
    <molecule id="Q9UIS9-5"/>
    <property type="protein sequence ID" value="ENSP00000269469.5"/>
    <property type="gene ID" value="ENSG00000141644.19"/>
</dbReference>
<dbReference type="Ensembl" id="ENST00000382948.9">
    <molecule id="Q9UIS9-1"/>
    <property type="protein sequence ID" value="ENSP00000372407.5"/>
    <property type="gene ID" value="ENSG00000141644.19"/>
</dbReference>
<dbReference type="Ensembl" id="ENST00000398488.5">
    <molecule id="Q9UIS9-4"/>
    <property type="protein sequence ID" value="ENSP00000381502.1"/>
    <property type="gene ID" value="ENSG00000141644.19"/>
</dbReference>
<dbReference type="Ensembl" id="ENST00000398493.5">
    <molecule id="Q9UIS9-7"/>
    <property type="protein sequence ID" value="ENSP00000381506.1"/>
    <property type="gene ID" value="ENSG00000141644.19"/>
</dbReference>
<dbReference type="Ensembl" id="ENST00000457839.6">
    <molecule id="Q9UIS9-9"/>
    <property type="protein sequence ID" value="ENSP00000405268.2"/>
    <property type="gene ID" value="ENSG00000141644.19"/>
</dbReference>
<dbReference type="Ensembl" id="ENST00000585595.5">
    <molecule id="Q9UIS9-9"/>
    <property type="protein sequence ID" value="ENSP00000468430.1"/>
    <property type="gene ID" value="ENSG00000141644.19"/>
</dbReference>
<dbReference type="Ensembl" id="ENST00000585672.5">
    <molecule id="Q9UIS9-10"/>
    <property type="protein sequence ID" value="ENSP00000466092.1"/>
    <property type="gene ID" value="ENSG00000141644.19"/>
</dbReference>
<dbReference type="Ensembl" id="ENST00000587605.5">
    <molecule id="Q9UIS9-11"/>
    <property type="protein sequence ID" value="ENSP00000468042.1"/>
    <property type="gene ID" value="ENSG00000141644.19"/>
</dbReference>
<dbReference type="Ensembl" id="ENST00000588937.5">
    <molecule id="Q9UIS9-2"/>
    <property type="protein sequence ID" value="ENSP00000467763.1"/>
    <property type="gene ID" value="ENSG00000141644.19"/>
</dbReference>
<dbReference type="Ensembl" id="ENST00000590208.5">
    <molecule id="Q9UIS9-12"/>
    <property type="protein sequence ID" value="ENSP00000468785.1"/>
    <property type="gene ID" value="ENSG00000141644.19"/>
</dbReference>
<dbReference type="Ensembl" id="ENST00000591416.5">
    <molecule id="Q9UIS9-1"/>
    <property type="protein sequence ID" value="ENSP00000467017.1"/>
    <property type="gene ID" value="ENSG00000141644.19"/>
</dbReference>
<dbReference type="Ensembl" id="ENST00000591535.5">
    <molecule id="Q9UIS9-8"/>
    <property type="protein sequence ID" value="ENSP00000465923.1"/>
    <property type="gene ID" value="ENSG00000141644.19"/>
</dbReference>
<dbReference type="GeneID" id="4152"/>
<dbReference type="KEGG" id="hsa:4152"/>
<dbReference type="MANE-Select" id="ENST00000269468.10">
    <property type="protein sequence ID" value="ENSP00000269468.5"/>
    <property type="RefSeq nucleotide sequence ID" value="NM_015846.4"/>
    <property type="RefSeq protein sequence ID" value="NP_056671.2"/>
</dbReference>
<dbReference type="UCSC" id="uc002leg.4">
    <molecule id="Q9UIS9-1"/>
    <property type="organism name" value="human"/>
</dbReference>
<dbReference type="AGR" id="HGNC:6916"/>
<dbReference type="CTD" id="4152"/>
<dbReference type="DisGeNET" id="4152"/>
<dbReference type="GeneCards" id="MBD1"/>
<dbReference type="HGNC" id="HGNC:6916">
    <property type="gene designation" value="MBD1"/>
</dbReference>
<dbReference type="HPA" id="ENSG00000141644">
    <property type="expression patterns" value="Low tissue specificity"/>
</dbReference>
<dbReference type="MalaCards" id="MBD1"/>
<dbReference type="MIM" id="156535">
    <property type="type" value="gene"/>
</dbReference>
<dbReference type="neXtProt" id="NX_Q9UIS9"/>
<dbReference type="OpenTargets" id="ENSG00000141644"/>
<dbReference type="PharmGKB" id="PA30659"/>
<dbReference type="VEuPathDB" id="HostDB:ENSG00000141644"/>
<dbReference type="eggNOG" id="ENOG502QQE9">
    <property type="taxonomic scope" value="Eukaryota"/>
</dbReference>
<dbReference type="GeneTree" id="ENSGT00950000183005"/>
<dbReference type="HOGENOM" id="CLU_031386_0_0_1"/>
<dbReference type="InParanoid" id="Q9UIS9"/>
<dbReference type="OMA" id="RTDCGRC"/>
<dbReference type="OrthoDB" id="10072024at2759"/>
<dbReference type="PAN-GO" id="Q9UIS9">
    <property type="GO annotations" value="0 GO annotations based on evolutionary models"/>
</dbReference>
<dbReference type="PhylomeDB" id="Q9UIS9"/>
<dbReference type="PathwayCommons" id="Q9UIS9"/>
<dbReference type="Reactome" id="R-HSA-3899300">
    <property type="pathway name" value="SUMOylation of transcription cofactors"/>
</dbReference>
<dbReference type="SignaLink" id="Q9UIS9"/>
<dbReference type="SIGNOR" id="Q9UIS9"/>
<dbReference type="BioGRID-ORCS" id="4152">
    <property type="hits" value="14 hits in 1184 CRISPR screens"/>
</dbReference>
<dbReference type="ChiTaRS" id="MBD1">
    <property type="organism name" value="human"/>
</dbReference>
<dbReference type="EvolutionaryTrace" id="Q9UIS9"/>
<dbReference type="GeneWiki" id="MBD1"/>
<dbReference type="GenomeRNAi" id="4152"/>
<dbReference type="Pharos" id="Q9UIS9">
    <property type="development level" value="Tbio"/>
</dbReference>
<dbReference type="PRO" id="PR:Q9UIS9"/>
<dbReference type="Proteomes" id="UP000005640">
    <property type="component" value="Chromosome 18"/>
</dbReference>
<dbReference type="RNAct" id="Q9UIS9">
    <property type="molecule type" value="protein"/>
</dbReference>
<dbReference type="Bgee" id="ENSG00000141644">
    <property type="expression patterns" value="Expressed in left testis and 207 other cell types or tissues"/>
</dbReference>
<dbReference type="ExpressionAtlas" id="Q9UIS9">
    <property type="expression patterns" value="baseline and differential"/>
</dbReference>
<dbReference type="GO" id="GO:0005694">
    <property type="term" value="C:chromosome"/>
    <property type="evidence" value="ECO:0007669"/>
    <property type="project" value="UniProtKB-SubCell"/>
</dbReference>
<dbReference type="GO" id="GO:0043231">
    <property type="term" value="C:intracellular membrane-bounded organelle"/>
    <property type="evidence" value="ECO:0000314"/>
    <property type="project" value="HPA"/>
</dbReference>
<dbReference type="GO" id="GO:0016363">
    <property type="term" value="C:nuclear matrix"/>
    <property type="evidence" value="ECO:0000250"/>
    <property type="project" value="UniProtKB"/>
</dbReference>
<dbReference type="GO" id="GO:0016607">
    <property type="term" value="C:nuclear speck"/>
    <property type="evidence" value="ECO:0000250"/>
    <property type="project" value="UniProtKB"/>
</dbReference>
<dbReference type="GO" id="GO:0005654">
    <property type="term" value="C:nucleoplasm"/>
    <property type="evidence" value="ECO:0000314"/>
    <property type="project" value="HPA"/>
</dbReference>
<dbReference type="GO" id="GO:0005634">
    <property type="term" value="C:nucleus"/>
    <property type="evidence" value="ECO:0000318"/>
    <property type="project" value="GO_Central"/>
</dbReference>
<dbReference type="GO" id="GO:0003677">
    <property type="term" value="F:DNA binding"/>
    <property type="evidence" value="ECO:0000304"/>
    <property type="project" value="ProtInc"/>
</dbReference>
<dbReference type="GO" id="GO:0010385">
    <property type="term" value="F:double-stranded methylated DNA binding"/>
    <property type="evidence" value="ECO:0000314"/>
    <property type="project" value="MGI"/>
</dbReference>
<dbReference type="GO" id="GO:0008327">
    <property type="term" value="F:methyl-CpG binding"/>
    <property type="evidence" value="ECO:0000314"/>
    <property type="project" value="UniProtKB"/>
</dbReference>
<dbReference type="GO" id="GO:0045322">
    <property type="term" value="F:unmethylated CpG binding"/>
    <property type="evidence" value="ECO:0000314"/>
    <property type="project" value="UniProtKB"/>
</dbReference>
<dbReference type="GO" id="GO:0008270">
    <property type="term" value="F:zinc ion binding"/>
    <property type="evidence" value="ECO:0000314"/>
    <property type="project" value="UniProtKB"/>
</dbReference>
<dbReference type="GO" id="GO:0006346">
    <property type="term" value="P:DNA methylation-dependent constitutive heterochromatin formation"/>
    <property type="evidence" value="ECO:0000318"/>
    <property type="project" value="GO_Central"/>
</dbReference>
<dbReference type="GO" id="GO:0045892">
    <property type="term" value="P:negative regulation of DNA-templated transcription"/>
    <property type="evidence" value="ECO:0000303"/>
    <property type="project" value="UniProtKB"/>
</dbReference>
<dbReference type="GO" id="GO:0000122">
    <property type="term" value="P:negative regulation of transcription by RNA polymerase II"/>
    <property type="evidence" value="ECO:0000318"/>
    <property type="project" value="GO_Central"/>
</dbReference>
<dbReference type="GO" id="GO:0006366">
    <property type="term" value="P:transcription by RNA polymerase II"/>
    <property type="evidence" value="ECO:0000304"/>
    <property type="project" value="ProtInc"/>
</dbReference>
<dbReference type="CDD" id="cd01396">
    <property type="entry name" value="MeCP2_MBD"/>
    <property type="match status" value="1"/>
</dbReference>
<dbReference type="FunFam" id="3.30.890.10:FF:000001">
    <property type="entry name" value="methyl-CpG-binding domain protein 1 isoform X7"/>
    <property type="match status" value="1"/>
</dbReference>
<dbReference type="Gene3D" id="3.30.890.10">
    <property type="entry name" value="Methyl-cpg-binding Protein 2, Chain A"/>
    <property type="match status" value="1"/>
</dbReference>
<dbReference type="IDEAL" id="IID00332"/>
<dbReference type="InterPro" id="IPR016177">
    <property type="entry name" value="DNA-bd_dom_sf"/>
</dbReference>
<dbReference type="InterPro" id="IPR001739">
    <property type="entry name" value="Methyl_CpG_DNA-bd"/>
</dbReference>
<dbReference type="InterPro" id="IPR002857">
    <property type="entry name" value="Znf_CXXC"/>
</dbReference>
<dbReference type="PANTHER" id="PTHR12396">
    <property type="entry name" value="METHYL-CPG BINDING PROTEIN, MBD"/>
    <property type="match status" value="1"/>
</dbReference>
<dbReference type="PANTHER" id="PTHR12396:SF57">
    <property type="entry name" value="METHYL-CPG-BINDING DOMAIN PROTEIN 1"/>
    <property type="match status" value="1"/>
</dbReference>
<dbReference type="Pfam" id="PF01429">
    <property type="entry name" value="MBD"/>
    <property type="match status" value="1"/>
</dbReference>
<dbReference type="Pfam" id="PF02008">
    <property type="entry name" value="zf-CXXC"/>
    <property type="match status" value="3"/>
</dbReference>
<dbReference type="SMART" id="SM00391">
    <property type="entry name" value="MBD"/>
    <property type="match status" value="1"/>
</dbReference>
<dbReference type="SUPFAM" id="SSF54171">
    <property type="entry name" value="DNA-binding domain"/>
    <property type="match status" value="1"/>
</dbReference>
<dbReference type="PROSITE" id="PS50982">
    <property type="entry name" value="MBD"/>
    <property type="match status" value="1"/>
</dbReference>
<dbReference type="PROSITE" id="PS51058">
    <property type="entry name" value="ZF_CXXC"/>
    <property type="match status" value="3"/>
</dbReference>
<organism>
    <name type="scientific">Homo sapiens</name>
    <name type="common">Human</name>
    <dbReference type="NCBI Taxonomy" id="9606"/>
    <lineage>
        <taxon>Eukaryota</taxon>
        <taxon>Metazoa</taxon>
        <taxon>Chordata</taxon>
        <taxon>Craniata</taxon>
        <taxon>Vertebrata</taxon>
        <taxon>Euteleostomi</taxon>
        <taxon>Mammalia</taxon>
        <taxon>Eutheria</taxon>
        <taxon>Euarchontoglires</taxon>
        <taxon>Primates</taxon>
        <taxon>Haplorrhini</taxon>
        <taxon>Catarrhini</taxon>
        <taxon>Hominidae</taxon>
        <taxon>Homo</taxon>
    </lineage>
</organism>
<name>MBD1_HUMAN</name>